<accession>A1SSY6</accession>
<comment type="function">
    <text evidence="1">NQR complex catalyzes the reduction of ubiquinone-1 to ubiquinol by two successive reactions, coupled with the transport of Na(+) ions from the cytoplasm to the periplasm. NqrA to NqrE are probably involved in the second step, the conversion of ubisemiquinone to ubiquinol.</text>
</comment>
<comment type="catalytic activity">
    <reaction evidence="1">
        <text>a ubiquinone + n Na(+)(in) + NADH + H(+) = a ubiquinol + n Na(+)(out) + NAD(+)</text>
        <dbReference type="Rhea" id="RHEA:47748"/>
        <dbReference type="Rhea" id="RHEA-COMP:9565"/>
        <dbReference type="Rhea" id="RHEA-COMP:9566"/>
        <dbReference type="ChEBI" id="CHEBI:15378"/>
        <dbReference type="ChEBI" id="CHEBI:16389"/>
        <dbReference type="ChEBI" id="CHEBI:17976"/>
        <dbReference type="ChEBI" id="CHEBI:29101"/>
        <dbReference type="ChEBI" id="CHEBI:57540"/>
        <dbReference type="ChEBI" id="CHEBI:57945"/>
        <dbReference type="EC" id="7.2.1.1"/>
    </reaction>
</comment>
<comment type="subunit">
    <text evidence="1">Composed of six subunits; NqrA, NqrB, NqrC, NqrD, NqrE and NqrF.</text>
</comment>
<comment type="subcellular location">
    <subcellularLocation>
        <location evidence="1">Cell inner membrane</location>
        <topology evidence="1">Multi-pass membrane protein</topology>
    </subcellularLocation>
</comment>
<comment type="similarity">
    <text evidence="1">Belongs to the NqrDE/RnfAE family.</text>
</comment>
<dbReference type="EC" id="7.2.1.1" evidence="1"/>
<dbReference type="EMBL" id="CP000510">
    <property type="protein sequence ID" value="ABM02601.1"/>
    <property type="molecule type" value="Genomic_DNA"/>
</dbReference>
<dbReference type="RefSeq" id="WP_011769160.1">
    <property type="nucleotide sequence ID" value="NC_008709.1"/>
</dbReference>
<dbReference type="SMR" id="A1SSY6"/>
<dbReference type="STRING" id="357804.Ping_0749"/>
<dbReference type="KEGG" id="pin:Ping_0749"/>
<dbReference type="eggNOG" id="COG1347">
    <property type="taxonomic scope" value="Bacteria"/>
</dbReference>
<dbReference type="HOGENOM" id="CLU_046659_1_1_6"/>
<dbReference type="OrthoDB" id="9782945at2"/>
<dbReference type="Proteomes" id="UP000000639">
    <property type="component" value="Chromosome"/>
</dbReference>
<dbReference type="GO" id="GO:0005886">
    <property type="term" value="C:plasma membrane"/>
    <property type="evidence" value="ECO:0007669"/>
    <property type="project" value="UniProtKB-SubCell"/>
</dbReference>
<dbReference type="GO" id="GO:0016655">
    <property type="term" value="F:oxidoreductase activity, acting on NAD(P)H, quinone or similar compound as acceptor"/>
    <property type="evidence" value="ECO:0007669"/>
    <property type="project" value="UniProtKB-UniRule"/>
</dbReference>
<dbReference type="GO" id="GO:0006814">
    <property type="term" value="P:sodium ion transport"/>
    <property type="evidence" value="ECO:0007669"/>
    <property type="project" value="UniProtKB-UniRule"/>
</dbReference>
<dbReference type="HAMAP" id="MF_00428">
    <property type="entry name" value="NqrD"/>
    <property type="match status" value="1"/>
</dbReference>
<dbReference type="InterPro" id="IPR011292">
    <property type="entry name" value="NqrD"/>
</dbReference>
<dbReference type="InterPro" id="IPR003667">
    <property type="entry name" value="NqrDE/RnfAE"/>
</dbReference>
<dbReference type="NCBIfam" id="TIGR01939">
    <property type="entry name" value="nqrD"/>
    <property type="match status" value="1"/>
</dbReference>
<dbReference type="NCBIfam" id="NF006777">
    <property type="entry name" value="PRK09292.1"/>
    <property type="match status" value="1"/>
</dbReference>
<dbReference type="NCBIfam" id="NF009070">
    <property type="entry name" value="PRK12405.1"/>
    <property type="match status" value="1"/>
</dbReference>
<dbReference type="PANTHER" id="PTHR30586">
    <property type="entry name" value="ELECTRON TRANSPORT COMPLEX PROTEIN RNFE"/>
    <property type="match status" value="1"/>
</dbReference>
<dbReference type="PANTHER" id="PTHR30586:SF1">
    <property type="entry name" value="NA(+)-TRANSLOCATING NADH-QUINONE REDUCTASE SUBUNIT D"/>
    <property type="match status" value="1"/>
</dbReference>
<dbReference type="Pfam" id="PF02508">
    <property type="entry name" value="Rnf-Nqr"/>
    <property type="match status" value="1"/>
</dbReference>
<dbReference type="PIRSF" id="PIRSF006102">
    <property type="entry name" value="NQR_DE"/>
    <property type="match status" value="1"/>
</dbReference>
<evidence type="ECO:0000255" key="1">
    <source>
        <dbReference type="HAMAP-Rule" id="MF_00428"/>
    </source>
</evidence>
<sequence>MAKSNEIKAVLTSPIISNNPITLQILGICSALAVTSKLENAVVMTVAVLFVTAFSNFFISTIRNYIPNSVRIIVQMAIIASLVIVVDQFLRAYAFSISKQLSVYVGLIITNCIVMGRAEAFAMKNKPIASFMDGVGNGLGYGVILILVGAFRELFGSGSLYGFVILPLTSNGGWYQSNGLLLLAPSAFFIVGGIIWAVRTMRPDQVEPKE</sequence>
<gene>
    <name evidence="1" type="primary">nqrD</name>
    <name type="ordered locus">Ping_0749</name>
</gene>
<name>NQRD_PSYIN</name>
<reference key="1">
    <citation type="journal article" date="2008" name="BMC Genomics">
        <title>Genomics of an extreme psychrophile, Psychromonas ingrahamii.</title>
        <authorList>
            <person name="Riley M."/>
            <person name="Staley J.T."/>
            <person name="Danchin A."/>
            <person name="Wang T.Z."/>
            <person name="Brettin T.S."/>
            <person name="Hauser L.J."/>
            <person name="Land M.L."/>
            <person name="Thompson L.S."/>
        </authorList>
    </citation>
    <scope>NUCLEOTIDE SEQUENCE [LARGE SCALE GENOMIC DNA]</scope>
    <source>
        <strain>DSM 17664 / CCUG 51855 / 37</strain>
    </source>
</reference>
<organism>
    <name type="scientific">Psychromonas ingrahamii (strain DSM 17664 / CCUG 51855 / 37)</name>
    <dbReference type="NCBI Taxonomy" id="357804"/>
    <lineage>
        <taxon>Bacteria</taxon>
        <taxon>Pseudomonadati</taxon>
        <taxon>Pseudomonadota</taxon>
        <taxon>Gammaproteobacteria</taxon>
        <taxon>Alteromonadales</taxon>
        <taxon>Psychromonadaceae</taxon>
        <taxon>Psychromonas</taxon>
    </lineage>
</organism>
<protein>
    <recommendedName>
        <fullName evidence="1">Na(+)-translocating NADH-quinone reductase subunit D</fullName>
        <shortName evidence="1">Na(+)-NQR subunit D</shortName>
        <shortName evidence="1">Na(+)-translocating NQR subunit D</shortName>
        <ecNumber evidence="1">7.2.1.1</ecNumber>
    </recommendedName>
    <alternativeName>
        <fullName evidence="1">NQR complex subunit D</fullName>
    </alternativeName>
    <alternativeName>
        <fullName evidence="1">NQR-1 subunit D</fullName>
    </alternativeName>
</protein>
<proteinExistence type="inferred from homology"/>
<keyword id="KW-0997">Cell inner membrane</keyword>
<keyword id="KW-1003">Cell membrane</keyword>
<keyword id="KW-0406">Ion transport</keyword>
<keyword id="KW-0472">Membrane</keyword>
<keyword id="KW-0520">NAD</keyword>
<keyword id="KW-1185">Reference proteome</keyword>
<keyword id="KW-0915">Sodium</keyword>
<keyword id="KW-0739">Sodium transport</keyword>
<keyword id="KW-1278">Translocase</keyword>
<keyword id="KW-0812">Transmembrane</keyword>
<keyword id="KW-1133">Transmembrane helix</keyword>
<keyword id="KW-0813">Transport</keyword>
<keyword id="KW-0830">Ubiquinone</keyword>
<feature type="chain" id="PRO_1000060163" description="Na(+)-translocating NADH-quinone reductase subunit D">
    <location>
        <begin position="1"/>
        <end position="210"/>
    </location>
</feature>
<feature type="transmembrane region" description="Helical" evidence="1">
    <location>
        <begin position="42"/>
        <end position="62"/>
    </location>
</feature>
<feature type="transmembrane region" description="Helical" evidence="1">
    <location>
        <begin position="66"/>
        <end position="86"/>
    </location>
</feature>
<feature type="transmembrane region" description="Helical" evidence="1">
    <location>
        <begin position="103"/>
        <end position="123"/>
    </location>
</feature>
<feature type="transmembrane region" description="Helical" evidence="1">
    <location>
        <begin position="131"/>
        <end position="151"/>
    </location>
</feature>
<feature type="transmembrane region" description="Helical" evidence="1">
    <location>
        <begin position="154"/>
        <end position="174"/>
    </location>
</feature>
<feature type="transmembrane region" description="Helical" evidence="1">
    <location>
        <begin position="178"/>
        <end position="198"/>
    </location>
</feature>